<feature type="chain" id="PRO_0000402633" description="Pyrimidine monooxygenase RutA">
    <location>
        <begin position="1"/>
        <end position="381"/>
    </location>
</feature>
<feature type="binding site" evidence="1">
    <location>
        <begin position="66"/>
        <end position="67"/>
    </location>
    <ligand>
        <name>FMN</name>
        <dbReference type="ChEBI" id="CHEBI:58210"/>
    </ligand>
</feature>
<feature type="binding site" evidence="1">
    <location>
        <position position="132"/>
    </location>
    <ligand>
        <name>FMN</name>
        <dbReference type="ChEBI" id="CHEBI:58210"/>
    </ligand>
</feature>
<feature type="binding site" evidence="1">
    <location>
        <position position="141"/>
    </location>
    <ligand>
        <name>FMN</name>
        <dbReference type="ChEBI" id="CHEBI:58210"/>
    </ligand>
</feature>
<feature type="binding site" evidence="1">
    <location>
        <begin position="157"/>
        <end position="158"/>
    </location>
    <ligand>
        <name>FMN</name>
        <dbReference type="ChEBI" id="CHEBI:58210"/>
    </ligand>
</feature>
<feature type="binding site" evidence="1">
    <location>
        <position position="207"/>
    </location>
    <ligand>
        <name>FMN</name>
        <dbReference type="ChEBI" id="CHEBI:58210"/>
    </ligand>
</feature>
<reference key="1">
    <citation type="submission" date="2008-03" db="EMBL/GenBank/DDBJ databases">
        <title>Complete sequence of chromosome of Methylobacterium radiotolerans JCM 2831.</title>
        <authorList>
            <consortium name="US DOE Joint Genome Institute"/>
            <person name="Copeland A."/>
            <person name="Lucas S."/>
            <person name="Lapidus A."/>
            <person name="Glavina del Rio T."/>
            <person name="Dalin E."/>
            <person name="Tice H."/>
            <person name="Bruce D."/>
            <person name="Goodwin L."/>
            <person name="Pitluck S."/>
            <person name="Kiss H."/>
            <person name="Brettin T."/>
            <person name="Detter J.C."/>
            <person name="Han C."/>
            <person name="Kuske C.R."/>
            <person name="Schmutz J."/>
            <person name="Larimer F."/>
            <person name="Land M."/>
            <person name="Hauser L."/>
            <person name="Kyrpides N."/>
            <person name="Mikhailova N."/>
            <person name="Marx C.J."/>
            <person name="Richardson P."/>
        </authorList>
    </citation>
    <scope>NUCLEOTIDE SEQUENCE [LARGE SCALE GENOMIC DNA]</scope>
    <source>
        <strain>ATCC 27329 / DSM 1819 / JCM 2831 / NBRC 15690 / NCIMB 10815 / 0-1</strain>
    </source>
</reference>
<keyword id="KW-0285">Flavoprotein</keyword>
<keyword id="KW-0288">FMN</keyword>
<keyword id="KW-0503">Monooxygenase</keyword>
<keyword id="KW-0521">NADP</keyword>
<keyword id="KW-0560">Oxidoreductase</keyword>
<comment type="function">
    <text evidence="1">Catalyzes the pyrimidine ring opening between N-3 and C-4 by an unusual flavin hydroperoxide-catalyzed mechanism, adding oxygen atoms in the process to yield ureidoacrylate peracid, that immediately reacts with FMN forming ureidoacrylate and FMN-N(5)-oxide. The FMN-N(5)-oxide reacts spontaneously with NADH to produce FMN. Requires the flavin reductase RutF to regenerate FMN in vivo.</text>
</comment>
<comment type="catalytic activity">
    <reaction evidence="1">
        <text>uracil + FMNH2 + NADH + O2 = (Z)-3-ureidoacrylate + FMN + NAD(+) + H2O + H(+)</text>
        <dbReference type="Rhea" id="RHEA:31587"/>
        <dbReference type="ChEBI" id="CHEBI:15377"/>
        <dbReference type="ChEBI" id="CHEBI:15378"/>
        <dbReference type="ChEBI" id="CHEBI:15379"/>
        <dbReference type="ChEBI" id="CHEBI:17568"/>
        <dbReference type="ChEBI" id="CHEBI:57540"/>
        <dbReference type="ChEBI" id="CHEBI:57618"/>
        <dbReference type="ChEBI" id="CHEBI:57945"/>
        <dbReference type="ChEBI" id="CHEBI:58210"/>
        <dbReference type="ChEBI" id="CHEBI:59891"/>
        <dbReference type="EC" id="1.14.99.46"/>
    </reaction>
</comment>
<comment type="catalytic activity">
    <reaction evidence="1">
        <text>thymine + FMNH2 + NADH + O2 = (Z)-2-methylureidoacrylate + FMN + NAD(+) + H2O + H(+)</text>
        <dbReference type="Rhea" id="RHEA:31599"/>
        <dbReference type="ChEBI" id="CHEBI:15377"/>
        <dbReference type="ChEBI" id="CHEBI:15378"/>
        <dbReference type="ChEBI" id="CHEBI:15379"/>
        <dbReference type="ChEBI" id="CHEBI:17821"/>
        <dbReference type="ChEBI" id="CHEBI:57540"/>
        <dbReference type="ChEBI" id="CHEBI:57618"/>
        <dbReference type="ChEBI" id="CHEBI:57945"/>
        <dbReference type="ChEBI" id="CHEBI:58210"/>
        <dbReference type="ChEBI" id="CHEBI:143783"/>
        <dbReference type="EC" id="1.14.99.46"/>
    </reaction>
</comment>
<comment type="similarity">
    <text evidence="1">Belongs to the NtaA/SnaA/DszA monooxygenase family. RutA subfamily.</text>
</comment>
<accession>B1M6B9</accession>
<organism>
    <name type="scientific">Methylobacterium radiotolerans (strain ATCC 27329 / DSM 1819 / JCM 2831 / NBRC 15690 / NCIMB 10815 / 0-1)</name>
    <dbReference type="NCBI Taxonomy" id="426355"/>
    <lineage>
        <taxon>Bacteria</taxon>
        <taxon>Pseudomonadati</taxon>
        <taxon>Pseudomonadota</taxon>
        <taxon>Alphaproteobacteria</taxon>
        <taxon>Hyphomicrobiales</taxon>
        <taxon>Methylobacteriaceae</taxon>
        <taxon>Methylobacterium</taxon>
    </lineage>
</organism>
<dbReference type="EC" id="1.14.99.46" evidence="1"/>
<dbReference type="EMBL" id="CP001001">
    <property type="protein sequence ID" value="ACB23579.1"/>
    <property type="molecule type" value="Genomic_DNA"/>
</dbReference>
<dbReference type="SMR" id="B1M6B9"/>
<dbReference type="STRING" id="426355.Mrad2831_1584"/>
<dbReference type="KEGG" id="mrd:Mrad2831_1584"/>
<dbReference type="eggNOG" id="COG2141">
    <property type="taxonomic scope" value="Bacteria"/>
</dbReference>
<dbReference type="HOGENOM" id="CLU_027853_1_1_5"/>
<dbReference type="Proteomes" id="UP000006589">
    <property type="component" value="Chromosome"/>
</dbReference>
<dbReference type="GO" id="GO:0008726">
    <property type="term" value="F:alkanesulfonate monooxygenase activity"/>
    <property type="evidence" value="ECO:0007669"/>
    <property type="project" value="TreeGrafter"/>
</dbReference>
<dbReference type="GO" id="GO:0052614">
    <property type="term" value="F:uracil oxygenase activity"/>
    <property type="evidence" value="ECO:0007669"/>
    <property type="project" value="UniProtKB-EC"/>
</dbReference>
<dbReference type="GO" id="GO:0046306">
    <property type="term" value="P:alkanesulfonate catabolic process"/>
    <property type="evidence" value="ECO:0007669"/>
    <property type="project" value="TreeGrafter"/>
</dbReference>
<dbReference type="GO" id="GO:0019740">
    <property type="term" value="P:nitrogen utilization"/>
    <property type="evidence" value="ECO:0007669"/>
    <property type="project" value="UniProtKB-UniRule"/>
</dbReference>
<dbReference type="GO" id="GO:0006212">
    <property type="term" value="P:uracil catabolic process"/>
    <property type="evidence" value="ECO:0007669"/>
    <property type="project" value="UniProtKB-UniRule"/>
</dbReference>
<dbReference type="CDD" id="cd01094">
    <property type="entry name" value="Alkanesulfonate_monoxygenase"/>
    <property type="match status" value="1"/>
</dbReference>
<dbReference type="Gene3D" id="3.20.20.30">
    <property type="entry name" value="Luciferase-like domain"/>
    <property type="match status" value="1"/>
</dbReference>
<dbReference type="HAMAP" id="MF_01699">
    <property type="entry name" value="RutA"/>
    <property type="match status" value="1"/>
</dbReference>
<dbReference type="InterPro" id="IPR011251">
    <property type="entry name" value="Luciferase-like_dom"/>
</dbReference>
<dbReference type="InterPro" id="IPR036661">
    <property type="entry name" value="Luciferase-like_sf"/>
</dbReference>
<dbReference type="InterPro" id="IPR019914">
    <property type="entry name" value="Pyrimidine_monooxygenase_RutA"/>
</dbReference>
<dbReference type="InterPro" id="IPR050172">
    <property type="entry name" value="SsuD_RutA_monooxygenase"/>
</dbReference>
<dbReference type="NCBIfam" id="TIGR03612">
    <property type="entry name" value="RutA"/>
    <property type="match status" value="1"/>
</dbReference>
<dbReference type="PANTHER" id="PTHR42847">
    <property type="entry name" value="ALKANESULFONATE MONOOXYGENASE"/>
    <property type="match status" value="1"/>
</dbReference>
<dbReference type="PANTHER" id="PTHR42847:SF4">
    <property type="entry name" value="ALKANESULFONATE MONOOXYGENASE-RELATED"/>
    <property type="match status" value="1"/>
</dbReference>
<dbReference type="Pfam" id="PF00296">
    <property type="entry name" value="Bac_luciferase"/>
    <property type="match status" value="1"/>
</dbReference>
<dbReference type="SUPFAM" id="SSF51679">
    <property type="entry name" value="Bacterial luciferase-like"/>
    <property type="match status" value="1"/>
</dbReference>
<proteinExistence type="inferred from homology"/>
<evidence type="ECO:0000255" key="1">
    <source>
        <dbReference type="HAMAP-Rule" id="MF_01699"/>
    </source>
</evidence>
<sequence length="381" mass="40926">MMRSHADDSAEARPAPAMSVGVFIPIGNNGWLLSENAPQYRPSFALNKAITLKAEGYGLDFALSMIKLRGFGGKTEFWDHNLESFTLMAGLAAVTTRIRLFATAATLCLPPAIVARMAATIDSISDGRFGLNLVTGWQKPEYDQMGLWPGDAHFANRYDYLAEYAQILRDLWETGASDRKGAYFQMNDCRLSPRPQAPVKIICAGQSGAGLAFTAQYADYNFCLGKGLNTPTAFAPVVEKLAEASARTGRRVTAFALFMIIADETDDAAMATWAHYRAGADAEAIAWLGAQGAADTRSGSDTNVRQLADPASAVNLNMGTLVGSYASVAAMLDAVMTIDGVEGVLLVFDDFLKGLDAFGTRIQPLMRSRRHVTAAALPEVA</sequence>
<name>RUTA_METRJ</name>
<gene>
    <name evidence="1" type="primary">rutA</name>
    <name type="ordered locus">Mrad2831_1584</name>
</gene>
<protein>
    <recommendedName>
        <fullName evidence="1">Pyrimidine monooxygenase RutA</fullName>
        <ecNumber evidence="1">1.14.99.46</ecNumber>
    </recommendedName>
</protein>